<accession>Q9XQQ7</accession>
<geneLocation type="apicoplast"/>
<proteinExistence type="inferred from homology"/>
<sequence length="198" mass="24421">MKKKFRTKLKKLQYFKLTFLPGFCTKLLKKELVPIKKGKTSSFRIQLLEKQKLKYNYRLKENQIKKYFKYIKLLKIFNLIQIIELRLDATIFRLGFAKSINQARQLITHGFIFINSILVKKPSFILTEKDLIYINPKKFTIILICRINLFFRYYNKYNLYIYTLCVEYLKFKLQKEFYFKLYLFIPFDENLIKYYYKF</sequence>
<organism>
    <name type="scientific">Toxoplasma gondii</name>
    <dbReference type="NCBI Taxonomy" id="5811"/>
    <lineage>
        <taxon>Eukaryota</taxon>
        <taxon>Sar</taxon>
        <taxon>Alveolata</taxon>
        <taxon>Apicomplexa</taxon>
        <taxon>Conoidasida</taxon>
        <taxon>Coccidia</taxon>
        <taxon>Eucoccidiorida</taxon>
        <taxon>Eimeriorina</taxon>
        <taxon>Sarcocystidae</taxon>
        <taxon>Toxoplasma</taxon>
    </lineage>
</organism>
<feature type="chain" id="PRO_0000293439" description="Small ribosomal subunit protein uS4c">
    <location>
        <begin position="1"/>
        <end position="198"/>
    </location>
</feature>
<feature type="domain" description="S4 RNA-binding" evidence="2">
    <location>
        <begin position="85"/>
        <end position="145"/>
    </location>
</feature>
<reference key="1">
    <citation type="submission" date="1999-06" db="EMBL/GenBank/DDBJ databases">
        <title>Mapping, cloning, and complete sequence annotation of the 35-kb plastid genome of Toxoplasma gondii.</title>
        <authorList>
            <person name="Kissinger J.C."/>
            <person name="Donald R.G."/>
            <person name="Moulton A.L."/>
            <person name="Gutell R."/>
            <person name="Aiello D.P."/>
            <person name="Lang-Unnasch N."/>
            <person name="Roos D.S."/>
        </authorList>
    </citation>
    <scope>NUCLEOTIDE SEQUENCE [GENOMIC DNA]</scope>
    <source>
        <strain>RH</strain>
    </source>
</reference>
<keyword id="KW-0933">Apicoplast</keyword>
<keyword id="KW-0934">Plastid</keyword>
<keyword id="KW-0687">Ribonucleoprotein</keyword>
<keyword id="KW-0689">Ribosomal protein</keyword>
<keyword id="KW-0694">RNA-binding</keyword>
<keyword id="KW-0699">rRNA-binding</keyword>
<protein>
    <recommendedName>
        <fullName evidence="3">Small ribosomal subunit protein uS4c</fullName>
    </recommendedName>
    <alternativeName>
        <fullName>Apicoplast 30S ribosomal protein S4</fullName>
    </alternativeName>
</protein>
<evidence type="ECO:0000250" key="1"/>
<evidence type="ECO:0000255" key="2">
    <source>
        <dbReference type="PROSITE-ProRule" id="PRU00182"/>
    </source>
</evidence>
<evidence type="ECO:0000305" key="3"/>
<gene>
    <name type="primary">rps4</name>
</gene>
<name>RR4_TOXGO</name>
<comment type="function">
    <text evidence="1">One of the primary rRNA binding proteins, it binds directly to 16S rRNA where it nucleates assembly of the body of the 30S subunit.</text>
</comment>
<comment type="subunit">
    <text evidence="1">Part of the 30S ribosomal subunit.</text>
</comment>
<comment type="subcellular location">
    <subcellularLocation>
        <location>Plastid</location>
        <location>Apicoplast</location>
    </subcellularLocation>
</comment>
<comment type="similarity">
    <text evidence="3">Belongs to the universal ribosomal protein uS4 family.</text>
</comment>
<dbReference type="EMBL" id="U87145">
    <property type="protein sequence ID" value="AAD41132.1"/>
    <property type="molecule type" value="Genomic_DNA"/>
</dbReference>
<dbReference type="RefSeq" id="NP_044545.1">
    <property type="nucleotide sequence ID" value="NC_001799.1"/>
</dbReference>
<dbReference type="SMR" id="Q9XQQ7"/>
<dbReference type="VEuPathDB" id="ToxoDB:TGARI_373090"/>
<dbReference type="VEuPathDB" id="ToxoDB:TGCAST_300641"/>
<dbReference type="VEuPathDB" id="ToxoDB:TGCOUG_397320"/>
<dbReference type="VEuPathDB" id="ToxoDB:TGFOU_300641"/>
<dbReference type="VEuPathDB" id="ToxoDB:TGGT1_300641B"/>
<dbReference type="VEuPathDB" id="ToxoDB:TGMAS_300641"/>
<dbReference type="VEuPathDB" id="ToxoDB:TGME49_300641"/>
<dbReference type="VEuPathDB" id="ToxoDB:TGP89_300641"/>
<dbReference type="VEuPathDB" id="ToxoDB:TGPRC2_300641"/>
<dbReference type="VEuPathDB" id="ToxoDB:TGRH88_086270"/>
<dbReference type="VEuPathDB" id="ToxoDB:TGRUB_300641"/>
<dbReference type="VEuPathDB" id="ToxoDB:TGVAND_300641"/>
<dbReference type="GO" id="GO:0020011">
    <property type="term" value="C:apicoplast"/>
    <property type="evidence" value="ECO:0007669"/>
    <property type="project" value="UniProtKB-SubCell"/>
</dbReference>
<dbReference type="GO" id="GO:0015935">
    <property type="term" value="C:small ribosomal subunit"/>
    <property type="evidence" value="ECO:0007669"/>
    <property type="project" value="TreeGrafter"/>
</dbReference>
<dbReference type="GO" id="GO:0019843">
    <property type="term" value="F:rRNA binding"/>
    <property type="evidence" value="ECO:0007669"/>
    <property type="project" value="UniProtKB-KW"/>
</dbReference>
<dbReference type="GO" id="GO:0003735">
    <property type="term" value="F:structural constituent of ribosome"/>
    <property type="evidence" value="ECO:0007669"/>
    <property type="project" value="TreeGrafter"/>
</dbReference>
<dbReference type="GO" id="GO:0042274">
    <property type="term" value="P:ribosomal small subunit biogenesis"/>
    <property type="evidence" value="ECO:0007669"/>
    <property type="project" value="TreeGrafter"/>
</dbReference>
<dbReference type="CDD" id="cd00165">
    <property type="entry name" value="S4"/>
    <property type="match status" value="1"/>
</dbReference>
<dbReference type="Gene3D" id="1.10.1050.10">
    <property type="entry name" value="Ribosomal Protein S4 Delta 41, Chain A, domain 1"/>
    <property type="match status" value="1"/>
</dbReference>
<dbReference type="Gene3D" id="3.10.290.10">
    <property type="entry name" value="RNA-binding S4 domain"/>
    <property type="match status" value="1"/>
</dbReference>
<dbReference type="InterPro" id="IPR022801">
    <property type="entry name" value="Ribosomal_uS4"/>
</dbReference>
<dbReference type="InterPro" id="IPR018079">
    <property type="entry name" value="Ribosomal_uS4_CS"/>
</dbReference>
<dbReference type="InterPro" id="IPR002942">
    <property type="entry name" value="S4_RNA-bd"/>
</dbReference>
<dbReference type="InterPro" id="IPR036986">
    <property type="entry name" value="S4_RNA-bd_sf"/>
</dbReference>
<dbReference type="PANTHER" id="PTHR11831">
    <property type="entry name" value="30S 40S RIBOSOMAL PROTEIN"/>
    <property type="match status" value="1"/>
</dbReference>
<dbReference type="PANTHER" id="PTHR11831:SF4">
    <property type="entry name" value="SMALL RIBOSOMAL SUBUNIT PROTEIN US4M"/>
    <property type="match status" value="1"/>
</dbReference>
<dbReference type="Pfam" id="PF01479">
    <property type="entry name" value="S4"/>
    <property type="match status" value="1"/>
</dbReference>
<dbReference type="SMART" id="SM00363">
    <property type="entry name" value="S4"/>
    <property type="match status" value="1"/>
</dbReference>
<dbReference type="SUPFAM" id="SSF55174">
    <property type="entry name" value="Alpha-L RNA-binding motif"/>
    <property type="match status" value="1"/>
</dbReference>
<dbReference type="PROSITE" id="PS00632">
    <property type="entry name" value="RIBOSOMAL_S4"/>
    <property type="match status" value="1"/>
</dbReference>
<dbReference type="PROSITE" id="PS50889">
    <property type="entry name" value="S4"/>
    <property type="match status" value="1"/>
</dbReference>